<organism>
    <name type="scientific">Corynebacterium diphtheriae (strain ATCC 700971 / NCTC 13129 / Biotype gravis)</name>
    <dbReference type="NCBI Taxonomy" id="257309"/>
    <lineage>
        <taxon>Bacteria</taxon>
        <taxon>Bacillati</taxon>
        <taxon>Actinomycetota</taxon>
        <taxon>Actinomycetes</taxon>
        <taxon>Mycobacteriales</taxon>
        <taxon>Corynebacteriaceae</taxon>
        <taxon>Corynebacterium</taxon>
    </lineage>
</organism>
<evidence type="ECO:0000255" key="1">
    <source>
        <dbReference type="HAMAP-Rule" id="MF_00391"/>
    </source>
</evidence>
<evidence type="ECO:0000305" key="2"/>
<protein>
    <recommendedName>
        <fullName evidence="1">Large ribosomal subunit protein bL34</fullName>
    </recommendedName>
    <alternativeName>
        <fullName evidence="2">50S ribosomal protein L34</fullName>
    </alternativeName>
</protein>
<gene>
    <name evidence="1" type="primary">rpmH</name>
    <name type="ordered locus">DIP2382</name>
</gene>
<keyword id="KW-1185">Reference proteome</keyword>
<keyword id="KW-0687">Ribonucleoprotein</keyword>
<keyword id="KW-0689">Ribosomal protein</keyword>
<feature type="chain" id="PRO_0000187371" description="Large ribosomal subunit protein bL34">
    <location>
        <begin position="1"/>
        <end position="47"/>
    </location>
</feature>
<proteinExistence type="inferred from homology"/>
<dbReference type="EMBL" id="BX248361">
    <property type="protein sequence ID" value="CAE50904.1"/>
    <property type="molecule type" value="Genomic_DNA"/>
</dbReference>
<dbReference type="RefSeq" id="WP_003853304.1">
    <property type="nucleotide sequence ID" value="NC_002935.2"/>
</dbReference>
<dbReference type="SMR" id="Q6NE95"/>
<dbReference type="STRING" id="257309.DIP2382"/>
<dbReference type="GeneID" id="97333400"/>
<dbReference type="KEGG" id="cdi:DIP2382"/>
<dbReference type="HOGENOM" id="CLU_129938_2_1_11"/>
<dbReference type="Proteomes" id="UP000002198">
    <property type="component" value="Chromosome"/>
</dbReference>
<dbReference type="GO" id="GO:1990904">
    <property type="term" value="C:ribonucleoprotein complex"/>
    <property type="evidence" value="ECO:0007669"/>
    <property type="project" value="UniProtKB-KW"/>
</dbReference>
<dbReference type="GO" id="GO:0005840">
    <property type="term" value="C:ribosome"/>
    <property type="evidence" value="ECO:0007669"/>
    <property type="project" value="UniProtKB-KW"/>
</dbReference>
<dbReference type="GO" id="GO:0003735">
    <property type="term" value="F:structural constituent of ribosome"/>
    <property type="evidence" value="ECO:0007669"/>
    <property type="project" value="InterPro"/>
</dbReference>
<dbReference type="GO" id="GO:0006412">
    <property type="term" value="P:translation"/>
    <property type="evidence" value="ECO:0007669"/>
    <property type="project" value="UniProtKB-UniRule"/>
</dbReference>
<dbReference type="FunFam" id="1.10.287.3980:FF:000001">
    <property type="entry name" value="Mitochondrial ribosomal protein L34"/>
    <property type="match status" value="1"/>
</dbReference>
<dbReference type="Gene3D" id="1.10.287.3980">
    <property type="match status" value="1"/>
</dbReference>
<dbReference type="HAMAP" id="MF_00391">
    <property type="entry name" value="Ribosomal_bL34"/>
    <property type="match status" value="1"/>
</dbReference>
<dbReference type="InterPro" id="IPR000271">
    <property type="entry name" value="Ribosomal_bL34"/>
</dbReference>
<dbReference type="InterPro" id="IPR020939">
    <property type="entry name" value="Ribosomal_bL34_CS"/>
</dbReference>
<dbReference type="NCBIfam" id="TIGR01030">
    <property type="entry name" value="rpmH_bact"/>
    <property type="match status" value="1"/>
</dbReference>
<dbReference type="PANTHER" id="PTHR14503:SF4">
    <property type="entry name" value="LARGE RIBOSOMAL SUBUNIT PROTEIN BL34M"/>
    <property type="match status" value="1"/>
</dbReference>
<dbReference type="PANTHER" id="PTHR14503">
    <property type="entry name" value="MITOCHONDRIAL RIBOSOMAL PROTEIN 34 FAMILY MEMBER"/>
    <property type="match status" value="1"/>
</dbReference>
<dbReference type="Pfam" id="PF00468">
    <property type="entry name" value="Ribosomal_L34"/>
    <property type="match status" value="1"/>
</dbReference>
<dbReference type="PROSITE" id="PS00784">
    <property type="entry name" value="RIBOSOMAL_L34"/>
    <property type="match status" value="1"/>
</dbReference>
<comment type="similarity">
    <text evidence="1">Belongs to the bacterial ribosomal protein bL34 family.</text>
</comment>
<sequence length="47" mass="5506">MAKGKRTFQPNNRRRARKHGFRIRMRTRAGRAIVAARRNKGRKSLTA</sequence>
<name>RL34_CORDI</name>
<reference key="1">
    <citation type="journal article" date="2003" name="Nucleic Acids Res.">
        <title>The complete genome sequence and analysis of Corynebacterium diphtheriae NCTC13129.</title>
        <authorList>
            <person name="Cerdeno-Tarraga A.-M."/>
            <person name="Efstratiou A."/>
            <person name="Dover L.G."/>
            <person name="Holden M.T.G."/>
            <person name="Pallen M.J."/>
            <person name="Bentley S.D."/>
            <person name="Besra G.S."/>
            <person name="Churcher C.M."/>
            <person name="James K.D."/>
            <person name="De Zoysa A."/>
            <person name="Chillingworth T."/>
            <person name="Cronin A."/>
            <person name="Dowd L."/>
            <person name="Feltwell T."/>
            <person name="Hamlin N."/>
            <person name="Holroyd S."/>
            <person name="Jagels K."/>
            <person name="Moule S."/>
            <person name="Quail M.A."/>
            <person name="Rabbinowitsch E."/>
            <person name="Rutherford K.M."/>
            <person name="Thomson N.R."/>
            <person name="Unwin L."/>
            <person name="Whitehead S."/>
            <person name="Barrell B.G."/>
            <person name="Parkhill J."/>
        </authorList>
    </citation>
    <scope>NUCLEOTIDE SEQUENCE [LARGE SCALE GENOMIC DNA]</scope>
    <source>
        <strain>ATCC 700971 / NCTC 13129 / Biotype gravis</strain>
    </source>
</reference>
<accession>Q6NE95</accession>